<organism>
    <name type="scientific">Brucella abortus (strain S19)</name>
    <dbReference type="NCBI Taxonomy" id="430066"/>
    <lineage>
        <taxon>Bacteria</taxon>
        <taxon>Pseudomonadati</taxon>
        <taxon>Pseudomonadota</taxon>
        <taxon>Alphaproteobacteria</taxon>
        <taxon>Hyphomicrobiales</taxon>
        <taxon>Brucellaceae</taxon>
        <taxon>Brucella/Ochrobactrum group</taxon>
        <taxon>Brucella</taxon>
    </lineage>
</organism>
<evidence type="ECO:0000255" key="1">
    <source>
        <dbReference type="HAMAP-Rule" id="MF_00435"/>
    </source>
</evidence>
<evidence type="ECO:0000255" key="2">
    <source>
        <dbReference type="PROSITE-ProRule" id="PRU01197"/>
    </source>
</evidence>
<evidence type="ECO:0000255" key="3">
    <source>
        <dbReference type="PROSITE-ProRule" id="PRU01198"/>
    </source>
</evidence>
<reference key="1">
    <citation type="journal article" date="2008" name="PLoS ONE">
        <title>Genome sequence of Brucella abortus vaccine strain S19 compared to virulent strains yields candidate virulence genes.</title>
        <authorList>
            <person name="Crasta O.R."/>
            <person name="Folkerts O."/>
            <person name="Fei Z."/>
            <person name="Mane S.P."/>
            <person name="Evans C."/>
            <person name="Martino-Catt S."/>
            <person name="Bricker B."/>
            <person name="Yu G."/>
            <person name="Du L."/>
            <person name="Sobral B.W."/>
        </authorList>
    </citation>
    <scope>NUCLEOTIDE SEQUENCE [LARGE SCALE GENOMIC DNA]</scope>
    <source>
        <strain>S19</strain>
    </source>
</reference>
<accession>B2S6K5</accession>
<name>ILVC_BRUA1</name>
<gene>
    <name evidence="1" type="primary">ilvC</name>
    <name type="ordered locus">BAbS19_I13070</name>
</gene>
<keyword id="KW-0028">Amino-acid biosynthesis</keyword>
<keyword id="KW-0100">Branched-chain amino acid biosynthesis</keyword>
<keyword id="KW-0460">Magnesium</keyword>
<keyword id="KW-0479">Metal-binding</keyword>
<keyword id="KW-0521">NADP</keyword>
<keyword id="KW-0560">Oxidoreductase</keyword>
<proteinExistence type="inferred from homology"/>
<dbReference type="EC" id="1.1.1.86" evidence="1"/>
<dbReference type="EMBL" id="CP000887">
    <property type="protein sequence ID" value="ACD72802.1"/>
    <property type="molecule type" value="Genomic_DNA"/>
</dbReference>
<dbReference type="RefSeq" id="WP_002964491.1">
    <property type="nucleotide sequence ID" value="NC_010742.1"/>
</dbReference>
<dbReference type="SMR" id="B2S6K5"/>
<dbReference type="GeneID" id="93016314"/>
<dbReference type="KEGG" id="bmc:BAbS19_I13070"/>
<dbReference type="HOGENOM" id="CLU_033821_0_1_5"/>
<dbReference type="UniPathway" id="UPA00047">
    <property type="reaction ID" value="UER00056"/>
</dbReference>
<dbReference type="UniPathway" id="UPA00049">
    <property type="reaction ID" value="UER00060"/>
</dbReference>
<dbReference type="Proteomes" id="UP000002565">
    <property type="component" value="Chromosome 1"/>
</dbReference>
<dbReference type="GO" id="GO:0005829">
    <property type="term" value="C:cytosol"/>
    <property type="evidence" value="ECO:0007669"/>
    <property type="project" value="TreeGrafter"/>
</dbReference>
<dbReference type="GO" id="GO:0004455">
    <property type="term" value="F:ketol-acid reductoisomerase activity"/>
    <property type="evidence" value="ECO:0007669"/>
    <property type="project" value="UniProtKB-UniRule"/>
</dbReference>
<dbReference type="GO" id="GO:0000287">
    <property type="term" value="F:magnesium ion binding"/>
    <property type="evidence" value="ECO:0007669"/>
    <property type="project" value="UniProtKB-UniRule"/>
</dbReference>
<dbReference type="GO" id="GO:0050661">
    <property type="term" value="F:NADP binding"/>
    <property type="evidence" value="ECO:0007669"/>
    <property type="project" value="InterPro"/>
</dbReference>
<dbReference type="GO" id="GO:0009097">
    <property type="term" value="P:isoleucine biosynthetic process"/>
    <property type="evidence" value="ECO:0007669"/>
    <property type="project" value="UniProtKB-UniRule"/>
</dbReference>
<dbReference type="GO" id="GO:0009099">
    <property type="term" value="P:L-valine biosynthetic process"/>
    <property type="evidence" value="ECO:0007669"/>
    <property type="project" value="UniProtKB-UniRule"/>
</dbReference>
<dbReference type="FunFam" id="3.40.50.720:FF:000023">
    <property type="entry name" value="Ketol-acid reductoisomerase (NADP(+))"/>
    <property type="match status" value="1"/>
</dbReference>
<dbReference type="Gene3D" id="6.10.240.10">
    <property type="match status" value="1"/>
</dbReference>
<dbReference type="Gene3D" id="3.40.50.720">
    <property type="entry name" value="NAD(P)-binding Rossmann-like Domain"/>
    <property type="match status" value="1"/>
</dbReference>
<dbReference type="HAMAP" id="MF_00435">
    <property type="entry name" value="IlvC"/>
    <property type="match status" value="1"/>
</dbReference>
<dbReference type="InterPro" id="IPR008927">
    <property type="entry name" value="6-PGluconate_DH-like_C_sf"/>
</dbReference>
<dbReference type="InterPro" id="IPR013023">
    <property type="entry name" value="KARI"/>
</dbReference>
<dbReference type="InterPro" id="IPR000506">
    <property type="entry name" value="KARI_C"/>
</dbReference>
<dbReference type="InterPro" id="IPR013116">
    <property type="entry name" value="KARI_N"/>
</dbReference>
<dbReference type="InterPro" id="IPR014359">
    <property type="entry name" value="KARI_prok"/>
</dbReference>
<dbReference type="InterPro" id="IPR036291">
    <property type="entry name" value="NAD(P)-bd_dom_sf"/>
</dbReference>
<dbReference type="NCBIfam" id="TIGR00465">
    <property type="entry name" value="ilvC"/>
    <property type="match status" value="1"/>
</dbReference>
<dbReference type="NCBIfam" id="NF004017">
    <property type="entry name" value="PRK05479.1"/>
    <property type="match status" value="1"/>
</dbReference>
<dbReference type="NCBIfam" id="NF009940">
    <property type="entry name" value="PRK13403.1"/>
    <property type="match status" value="1"/>
</dbReference>
<dbReference type="PANTHER" id="PTHR21371">
    <property type="entry name" value="KETOL-ACID REDUCTOISOMERASE, MITOCHONDRIAL"/>
    <property type="match status" value="1"/>
</dbReference>
<dbReference type="PANTHER" id="PTHR21371:SF1">
    <property type="entry name" value="KETOL-ACID REDUCTOISOMERASE, MITOCHONDRIAL"/>
    <property type="match status" value="1"/>
</dbReference>
<dbReference type="Pfam" id="PF01450">
    <property type="entry name" value="KARI_C"/>
    <property type="match status" value="1"/>
</dbReference>
<dbReference type="Pfam" id="PF07991">
    <property type="entry name" value="KARI_N"/>
    <property type="match status" value="1"/>
</dbReference>
<dbReference type="PIRSF" id="PIRSF000116">
    <property type="entry name" value="IlvC_gammaproteo"/>
    <property type="match status" value="1"/>
</dbReference>
<dbReference type="SUPFAM" id="SSF48179">
    <property type="entry name" value="6-phosphogluconate dehydrogenase C-terminal domain-like"/>
    <property type="match status" value="1"/>
</dbReference>
<dbReference type="SUPFAM" id="SSF51735">
    <property type="entry name" value="NAD(P)-binding Rossmann-fold domains"/>
    <property type="match status" value="1"/>
</dbReference>
<dbReference type="PROSITE" id="PS51851">
    <property type="entry name" value="KARI_C"/>
    <property type="match status" value="1"/>
</dbReference>
<dbReference type="PROSITE" id="PS51850">
    <property type="entry name" value="KARI_N"/>
    <property type="match status" value="1"/>
</dbReference>
<comment type="function">
    <text evidence="1">Involved in the biosynthesis of branched-chain amino acids (BCAA). Catalyzes an alkyl-migration followed by a ketol-acid reduction of (S)-2-acetolactate (S2AL) to yield (R)-2,3-dihydroxy-isovalerate. In the isomerase reaction, S2AL is rearranged via a Mg-dependent methyl migration to produce 3-hydroxy-3-methyl-2-ketobutyrate (HMKB). In the reductase reaction, this 2-ketoacid undergoes a metal-dependent reduction by NADPH to yield (R)-2,3-dihydroxy-isovalerate.</text>
</comment>
<comment type="catalytic activity">
    <reaction evidence="1">
        <text>(2R)-2,3-dihydroxy-3-methylbutanoate + NADP(+) = (2S)-2-acetolactate + NADPH + H(+)</text>
        <dbReference type="Rhea" id="RHEA:22068"/>
        <dbReference type="ChEBI" id="CHEBI:15378"/>
        <dbReference type="ChEBI" id="CHEBI:49072"/>
        <dbReference type="ChEBI" id="CHEBI:57783"/>
        <dbReference type="ChEBI" id="CHEBI:58349"/>
        <dbReference type="ChEBI" id="CHEBI:58476"/>
        <dbReference type="EC" id="1.1.1.86"/>
    </reaction>
</comment>
<comment type="catalytic activity">
    <reaction evidence="1">
        <text>(2R,3R)-2,3-dihydroxy-3-methylpentanoate + NADP(+) = (S)-2-ethyl-2-hydroxy-3-oxobutanoate + NADPH + H(+)</text>
        <dbReference type="Rhea" id="RHEA:13493"/>
        <dbReference type="ChEBI" id="CHEBI:15378"/>
        <dbReference type="ChEBI" id="CHEBI:49256"/>
        <dbReference type="ChEBI" id="CHEBI:49258"/>
        <dbReference type="ChEBI" id="CHEBI:57783"/>
        <dbReference type="ChEBI" id="CHEBI:58349"/>
        <dbReference type="EC" id="1.1.1.86"/>
    </reaction>
</comment>
<comment type="cofactor">
    <cofactor evidence="1">
        <name>Mg(2+)</name>
        <dbReference type="ChEBI" id="CHEBI:18420"/>
    </cofactor>
    <text evidence="1">Binds 2 magnesium ions per subunit.</text>
</comment>
<comment type="pathway">
    <text evidence="1">Amino-acid biosynthesis; L-isoleucine biosynthesis; L-isoleucine from 2-oxobutanoate: step 2/4.</text>
</comment>
<comment type="pathway">
    <text evidence="1">Amino-acid biosynthesis; L-valine biosynthesis; L-valine from pyruvate: step 2/4.</text>
</comment>
<comment type="similarity">
    <text evidence="1">Belongs to the ketol-acid reductoisomerase family.</text>
</comment>
<feature type="chain" id="PRO_1000190915" description="Ketol-acid reductoisomerase (NADP(+))">
    <location>
        <begin position="1"/>
        <end position="339"/>
    </location>
</feature>
<feature type="domain" description="KARI N-terminal Rossmann" evidence="2">
    <location>
        <begin position="1"/>
        <end position="182"/>
    </location>
</feature>
<feature type="domain" description="KARI C-terminal knotted" evidence="3">
    <location>
        <begin position="183"/>
        <end position="328"/>
    </location>
</feature>
<feature type="active site" evidence="1">
    <location>
        <position position="108"/>
    </location>
</feature>
<feature type="binding site" evidence="1">
    <location>
        <begin position="24"/>
        <end position="27"/>
    </location>
    <ligand>
        <name>NADP(+)</name>
        <dbReference type="ChEBI" id="CHEBI:58349"/>
    </ligand>
</feature>
<feature type="binding site" evidence="1">
    <location>
        <position position="48"/>
    </location>
    <ligand>
        <name>NADP(+)</name>
        <dbReference type="ChEBI" id="CHEBI:58349"/>
    </ligand>
</feature>
<feature type="binding site" evidence="1">
    <location>
        <position position="51"/>
    </location>
    <ligand>
        <name>NADP(+)</name>
        <dbReference type="ChEBI" id="CHEBI:58349"/>
    </ligand>
</feature>
<feature type="binding site" evidence="1">
    <location>
        <position position="53"/>
    </location>
    <ligand>
        <name>NADP(+)</name>
        <dbReference type="ChEBI" id="CHEBI:58349"/>
    </ligand>
</feature>
<feature type="binding site" evidence="1">
    <location>
        <begin position="83"/>
        <end position="86"/>
    </location>
    <ligand>
        <name>NADP(+)</name>
        <dbReference type="ChEBI" id="CHEBI:58349"/>
    </ligand>
</feature>
<feature type="binding site" evidence="1">
    <location>
        <position position="134"/>
    </location>
    <ligand>
        <name>NADP(+)</name>
        <dbReference type="ChEBI" id="CHEBI:58349"/>
    </ligand>
</feature>
<feature type="binding site" evidence="1">
    <location>
        <position position="191"/>
    </location>
    <ligand>
        <name>Mg(2+)</name>
        <dbReference type="ChEBI" id="CHEBI:18420"/>
        <label>1</label>
    </ligand>
</feature>
<feature type="binding site" evidence="1">
    <location>
        <position position="191"/>
    </location>
    <ligand>
        <name>Mg(2+)</name>
        <dbReference type="ChEBI" id="CHEBI:18420"/>
        <label>2</label>
    </ligand>
</feature>
<feature type="binding site" evidence="1">
    <location>
        <position position="195"/>
    </location>
    <ligand>
        <name>Mg(2+)</name>
        <dbReference type="ChEBI" id="CHEBI:18420"/>
        <label>1</label>
    </ligand>
</feature>
<feature type="binding site" evidence="1">
    <location>
        <position position="227"/>
    </location>
    <ligand>
        <name>Mg(2+)</name>
        <dbReference type="ChEBI" id="CHEBI:18420"/>
        <label>2</label>
    </ligand>
</feature>
<feature type="binding site" evidence="1">
    <location>
        <position position="231"/>
    </location>
    <ligand>
        <name>Mg(2+)</name>
        <dbReference type="ChEBI" id="CHEBI:18420"/>
        <label>2</label>
    </ligand>
</feature>
<feature type="binding site" evidence="1">
    <location>
        <position position="252"/>
    </location>
    <ligand>
        <name>substrate</name>
    </ligand>
</feature>
<protein>
    <recommendedName>
        <fullName evidence="1">Ketol-acid reductoisomerase (NADP(+))</fullName>
        <shortName evidence="1">KARI</shortName>
        <ecNumber evidence="1">1.1.1.86</ecNumber>
    </recommendedName>
    <alternativeName>
        <fullName evidence="1">Acetohydroxy-acid isomeroreductase</fullName>
        <shortName evidence="1">AHIR</shortName>
    </alternativeName>
    <alternativeName>
        <fullName evidence="1">Alpha-keto-beta-hydroxylacyl reductoisomerase</fullName>
    </alternativeName>
    <alternativeName>
        <fullName evidence="1">Ketol-acid reductoisomerase type 1</fullName>
    </alternativeName>
    <alternativeName>
        <fullName evidence="1">Ketol-acid reductoisomerase type I</fullName>
    </alternativeName>
</protein>
<sequence>MRVYYDRDADVNLIKSKKVVIVGYGSQGRAHALNLKDSGAANVRVALREGSATVQKAQADGFEVMNVADAAKWADLMMMATPDELQADIYRDHIHNNLRDGAAIAFAHGLNVHCGLIEPKKTVDVVMIAPKGPGHTVRGEYQKGGGVPCLIAIHQDASGNAHDLALSYASGVGGGRSGVIETTFKEECETDLFGEQAVLCGGVVELIRTGFEVLVEAGYAPEMAYFECLNEMKLIVDLIYEGGIANMNYSISNTAEWGEYVTGPRIITAETKAEMKRVLKDIQTGKFTSDWMQEWKAGAARFKGIRRLNDAHQIEEVGGKLRAMMPWIEKNKLVDKARN</sequence>